<evidence type="ECO:0000255" key="1">
    <source>
        <dbReference type="HAMAP-Rule" id="MF_00236"/>
    </source>
</evidence>
<evidence type="ECO:0000256" key="2">
    <source>
        <dbReference type="SAM" id="MobiDB-lite"/>
    </source>
</evidence>
<feature type="chain" id="PRO_1000044450" description="Sec-independent protein translocase protein TatA">
    <location>
        <begin position="1"/>
        <end position="88"/>
    </location>
</feature>
<feature type="transmembrane region" description="Helical" evidence="1">
    <location>
        <begin position="1"/>
        <end position="21"/>
    </location>
</feature>
<feature type="region of interest" description="Disordered" evidence="2">
    <location>
        <begin position="39"/>
        <end position="88"/>
    </location>
</feature>
<feature type="compositionally biased region" description="Low complexity" evidence="2">
    <location>
        <begin position="49"/>
        <end position="62"/>
    </location>
</feature>
<feature type="compositionally biased region" description="Basic and acidic residues" evidence="2">
    <location>
        <begin position="78"/>
        <end position="88"/>
    </location>
</feature>
<name>TATA_SODGM</name>
<proteinExistence type="inferred from homology"/>
<gene>
    <name evidence="1" type="primary">tatA</name>
    <name type="ordered locus">SG0112</name>
</gene>
<comment type="function">
    <text evidence="1">Part of the twin-arginine translocation (Tat) system that transports large folded proteins containing a characteristic twin-arginine motif in their signal peptide across membranes. TatA could form the protein-conducting channel of the Tat system.</text>
</comment>
<comment type="subunit">
    <text evidence="1">The Tat system comprises two distinct complexes: a TatABC complex, containing multiple copies of TatA, TatB and TatC subunits, and a separate TatA complex, containing only TatA subunits. Substrates initially bind to the TatABC complex, which probably triggers association of the separate TatA complex to form the active translocon.</text>
</comment>
<comment type="subcellular location">
    <subcellularLocation>
        <location evidence="1">Cell inner membrane</location>
        <topology evidence="1">Single-pass membrane protein</topology>
    </subcellularLocation>
</comment>
<comment type="similarity">
    <text evidence="1">Belongs to the TatA/E family.</text>
</comment>
<dbReference type="EMBL" id="AP008232">
    <property type="protein sequence ID" value="BAE73387.1"/>
    <property type="molecule type" value="Genomic_DNA"/>
</dbReference>
<dbReference type="RefSeq" id="WP_011409977.1">
    <property type="nucleotide sequence ID" value="NC_007712.1"/>
</dbReference>
<dbReference type="SMR" id="Q2NWT8"/>
<dbReference type="STRING" id="343509.SG0112"/>
<dbReference type="KEGG" id="sgl:SG0112"/>
<dbReference type="eggNOG" id="COG1826">
    <property type="taxonomic scope" value="Bacteria"/>
</dbReference>
<dbReference type="HOGENOM" id="CLU_086034_5_1_6"/>
<dbReference type="OrthoDB" id="7066617at2"/>
<dbReference type="BioCyc" id="SGLO343509:SGP1_RS00965-MONOMER"/>
<dbReference type="Proteomes" id="UP000001932">
    <property type="component" value="Chromosome"/>
</dbReference>
<dbReference type="GO" id="GO:0033281">
    <property type="term" value="C:TAT protein transport complex"/>
    <property type="evidence" value="ECO:0007669"/>
    <property type="project" value="UniProtKB-UniRule"/>
</dbReference>
<dbReference type="GO" id="GO:0008320">
    <property type="term" value="F:protein transmembrane transporter activity"/>
    <property type="evidence" value="ECO:0007669"/>
    <property type="project" value="UniProtKB-UniRule"/>
</dbReference>
<dbReference type="GO" id="GO:0043953">
    <property type="term" value="P:protein transport by the Tat complex"/>
    <property type="evidence" value="ECO:0007669"/>
    <property type="project" value="UniProtKB-UniRule"/>
</dbReference>
<dbReference type="Gene3D" id="1.20.5.3310">
    <property type="match status" value="1"/>
</dbReference>
<dbReference type="HAMAP" id="MF_00236">
    <property type="entry name" value="TatA_E"/>
    <property type="match status" value="1"/>
</dbReference>
<dbReference type="InterPro" id="IPR003369">
    <property type="entry name" value="TatA/B/E"/>
</dbReference>
<dbReference type="InterPro" id="IPR006312">
    <property type="entry name" value="TatA/E"/>
</dbReference>
<dbReference type="NCBIfam" id="TIGR01411">
    <property type="entry name" value="tatAE"/>
    <property type="match status" value="1"/>
</dbReference>
<dbReference type="PANTHER" id="PTHR42982">
    <property type="entry name" value="SEC-INDEPENDENT PROTEIN TRANSLOCASE PROTEIN TATA"/>
    <property type="match status" value="1"/>
</dbReference>
<dbReference type="PANTHER" id="PTHR42982:SF1">
    <property type="entry name" value="SEC-INDEPENDENT PROTEIN TRANSLOCASE PROTEIN TATA"/>
    <property type="match status" value="1"/>
</dbReference>
<dbReference type="Pfam" id="PF02416">
    <property type="entry name" value="TatA_B_E"/>
    <property type="match status" value="1"/>
</dbReference>
<accession>Q2NWT8</accession>
<keyword id="KW-0997">Cell inner membrane</keyword>
<keyword id="KW-1003">Cell membrane</keyword>
<keyword id="KW-0472">Membrane</keyword>
<keyword id="KW-0653">Protein transport</keyword>
<keyword id="KW-0811">Translocation</keyword>
<keyword id="KW-0812">Transmembrane</keyword>
<keyword id="KW-1133">Transmembrane helix</keyword>
<keyword id="KW-0813">Transport</keyword>
<protein>
    <recommendedName>
        <fullName evidence="1">Sec-independent protein translocase protein TatA</fullName>
    </recommendedName>
</protein>
<organism>
    <name type="scientific">Sodalis glossinidius (strain morsitans)</name>
    <dbReference type="NCBI Taxonomy" id="343509"/>
    <lineage>
        <taxon>Bacteria</taxon>
        <taxon>Pseudomonadati</taxon>
        <taxon>Pseudomonadota</taxon>
        <taxon>Gammaproteobacteria</taxon>
        <taxon>Enterobacterales</taxon>
        <taxon>Bruguierivoracaceae</taxon>
        <taxon>Sodalis</taxon>
    </lineage>
</organism>
<reference key="1">
    <citation type="journal article" date="2006" name="Genome Res.">
        <title>Massive genome erosion and functional adaptations provide insights into the symbiotic lifestyle of Sodalis glossinidius in the tsetse host.</title>
        <authorList>
            <person name="Toh H."/>
            <person name="Weiss B.L."/>
            <person name="Perkin S.A.H."/>
            <person name="Yamashita A."/>
            <person name="Oshima K."/>
            <person name="Hattori M."/>
            <person name="Aksoy S."/>
        </authorList>
    </citation>
    <scope>NUCLEOTIDE SEQUENCE [LARGE SCALE GENOMIC DNA]</scope>
    <source>
        <strain>morsitans</strain>
    </source>
</reference>
<sequence length="88" mass="9267">MGGISITQLLIIASIVVVLFGTKKLRGLGSDLGASIKGFKKSMSEDDNTTSTSSDKSSQDADFTAPPIEPKANLACPDEAKNKDKEHV</sequence>